<proteinExistence type="inferred from homology"/>
<comment type="function">
    <text evidence="2">Component of the ubiquinol-cytochrome c reductase complex (complex III or cytochrome b-c1 complex) that is part of the mitochondrial respiratory chain. The b-c1 complex mediates electron transfer from ubiquinol to cytochrome c. Contributes to the generation of a proton gradient across the mitochondrial membrane that is then used for ATP synthesis.</text>
</comment>
<comment type="cofactor">
    <cofactor evidence="2">
        <name>heme b</name>
        <dbReference type="ChEBI" id="CHEBI:60344"/>
    </cofactor>
    <text evidence="2">Binds 2 heme b groups non-covalently.</text>
</comment>
<comment type="subunit">
    <text evidence="2">The cytochrome bc1 complex contains 11 subunits: 3 respiratory subunits (MT-CYB, CYC1 and UQCRFS1), 2 core proteins (UQCRC1 and UQCRC2) and 6 low-molecular weight proteins (UQCRH/QCR6, UQCRB/QCR7, UQCRQ/QCR8, UQCR10/QCR9, UQCR11/QCR10 and a cleavage product of UQCRFS1). This cytochrome bc1 complex then forms a dimer.</text>
</comment>
<comment type="subcellular location">
    <subcellularLocation>
        <location evidence="2">Mitochondrion inner membrane</location>
        <topology evidence="2">Multi-pass membrane protein</topology>
    </subcellularLocation>
</comment>
<comment type="miscellaneous">
    <text evidence="1">Heme 1 (or BL or b562) is low-potential and absorbs at about 562 nm, and heme 2 (or BH or b566) is high-potential and absorbs at about 566 nm.</text>
</comment>
<comment type="similarity">
    <text evidence="3 4">Belongs to the cytochrome b family.</text>
</comment>
<comment type="caution">
    <text evidence="2">The full-length protein contains only eight transmembrane helices, not nine as predicted by bioinformatics tools.</text>
</comment>
<gene>
    <name type="primary">MT-CYB</name>
    <name type="synonym">COB</name>
    <name type="synonym">CYTB</name>
    <name type="synonym">MTCYB</name>
</gene>
<name>CYB_TODTO</name>
<geneLocation type="mitochondrion"/>
<protein>
    <recommendedName>
        <fullName>Cytochrome b</fullName>
    </recommendedName>
    <alternativeName>
        <fullName>Complex III subunit 3</fullName>
    </alternativeName>
    <alternativeName>
        <fullName>Complex III subunit III</fullName>
    </alternativeName>
    <alternativeName>
        <fullName>Cytochrome b-c1 complex subunit 3</fullName>
    </alternativeName>
    <alternativeName>
        <fullName>Ubiquinol-cytochrome-c reductase complex cytochrome b subunit</fullName>
    </alternativeName>
</protein>
<keyword id="KW-0249">Electron transport</keyword>
<keyword id="KW-0349">Heme</keyword>
<keyword id="KW-0408">Iron</keyword>
<keyword id="KW-0472">Membrane</keyword>
<keyword id="KW-0479">Metal-binding</keyword>
<keyword id="KW-0496">Mitochondrion</keyword>
<keyword id="KW-0999">Mitochondrion inner membrane</keyword>
<keyword id="KW-0679">Respiratory chain</keyword>
<keyword id="KW-0812">Transmembrane</keyword>
<keyword id="KW-1133">Transmembrane helix</keyword>
<keyword id="KW-0813">Transport</keyword>
<keyword id="KW-0830">Ubiquinone</keyword>
<feature type="chain" id="PRO_0000061670" description="Cytochrome b">
    <location>
        <begin position="1"/>
        <end position="380"/>
    </location>
</feature>
<feature type="transmembrane region" description="Helical" evidence="2">
    <location>
        <begin position="34"/>
        <end position="54"/>
    </location>
</feature>
<feature type="transmembrane region" description="Helical" evidence="2">
    <location>
        <begin position="78"/>
        <end position="99"/>
    </location>
</feature>
<feature type="transmembrane region" description="Helical" evidence="2">
    <location>
        <begin position="114"/>
        <end position="134"/>
    </location>
</feature>
<feature type="transmembrane region" description="Helical" evidence="2">
    <location>
        <begin position="179"/>
        <end position="199"/>
    </location>
</feature>
<feature type="transmembrane region" description="Helical" evidence="2">
    <location>
        <begin position="227"/>
        <end position="247"/>
    </location>
</feature>
<feature type="transmembrane region" description="Helical" evidence="2">
    <location>
        <begin position="289"/>
        <end position="309"/>
    </location>
</feature>
<feature type="transmembrane region" description="Helical" evidence="2">
    <location>
        <begin position="321"/>
        <end position="341"/>
    </location>
</feature>
<feature type="transmembrane region" description="Helical" evidence="2">
    <location>
        <begin position="348"/>
        <end position="368"/>
    </location>
</feature>
<feature type="binding site" description="axial binding residue" evidence="2">
    <location>
        <position position="84"/>
    </location>
    <ligand>
        <name>heme b</name>
        <dbReference type="ChEBI" id="CHEBI:60344"/>
        <label>b562</label>
    </ligand>
    <ligandPart>
        <name>Fe</name>
        <dbReference type="ChEBI" id="CHEBI:18248"/>
    </ligandPart>
</feature>
<feature type="binding site" description="axial binding residue" evidence="2">
    <location>
        <position position="98"/>
    </location>
    <ligand>
        <name>heme b</name>
        <dbReference type="ChEBI" id="CHEBI:60344"/>
        <label>b566</label>
    </ligand>
    <ligandPart>
        <name>Fe</name>
        <dbReference type="ChEBI" id="CHEBI:18248"/>
    </ligandPart>
</feature>
<feature type="binding site" description="axial binding residue" evidence="2">
    <location>
        <position position="183"/>
    </location>
    <ligand>
        <name>heme b</name>
        <dbReference type="ChEBI" id="CHEBI:60344"/>
        <label>b562</label>
    </ligand>
    <ligandPart>
        <name>Fe</name>
        <dbReference type="ChEBI" id="CHEBI:18248"/>
    </ligandPart>
</feature>
<feature type="binding site" description="axial binding residue" evidence="2">
    <location>
        <position position="197"/>
    </location>
    <ligand>
        <name>heme b</name>
        <dbReference type="ChEBI" id="CHEBI:60344"/>
        <label>b566</label>
    </ligand>
    <ligandPart>
        <name>Fe</name>
        <dbReference type="ChEBI" id="CHEBI:18248"/>
    </ligandPart>
</feature>
<feature type="binding site" evidence="2">
    <location>
        <position position="202"/>
    </location>
    <ligand>
        <name>a ubiquinone</name>
        <dbReference type="ChEBI" id="CHEBI:16389"/>
    </ligand>
</feature>
<sequence length="380" mass="42489">MAPNPRKSHPILKMVNNSLIDLPTPPNISAWWNFGSLLGICLVTQILTGLLLATHYTADTSLAFSSVAHTCRNVQYGWLIRNLHANGASLFFICIYLHIGRGLYYGSYLYKETWNTGVILLLSLMATAFVGYVLPWGQMSFWGATVITNLFSAFPYIGQTLVEWAWGGFSVDNPTLTRFFALHFLLPFLIAGLTLTHLTFLHETGSNNPLGLISNCDKIPFHPYFSPKDLLGFILMFLPLTALALFSPNLLGDPENFTPANPLVTPPHIKPEWYFLFAYAILRSIPNKLGGVLALAASVLILFLAPFLHKSKQRTMTFRPLSQLLFWILVTNLLILTWVGSQPVEQPFIIIGQLASLAYFIILLILFPIIGALENKMLNF</sequence>
<dbReference type="EMBL" id="U89186">
    <property type="protein sequence ID" value="AAD00681.1"/>
    <property type="molecule type" value="Genomic_DNA"/>
</dbReference>
<dbReference type="SMR" id="Q9ZZD2"/>
<dbReference type="GO" id="GO:0005743">
    <property type="term" value="C:mitochondrial inner membrane"/>
    <property type="evidence" value="ECO:0007669"/>
    <property type="project" value="UniProtKB-SubCell"/>
</dbReference>
<dbReference type="GO" id="GO:0045275">
    <property type="term" value="C:respiratory chain complex III"/>
    <property type="evidence" value="ECO:0007669"/>
    <property type="project" value="InterPro"/>
</dbReference>
<dbReference type="GO" id="GO:0046872">
    <property type="term" value="F:metal ion binding"/>
    <property type="evidence" value="ECO:0007669"/>
    <property type="project" value="UniProtKB-KW"/>
</dbReference>
<dbReference type="GO" id="GO:0008121">
    <property type="term" value="F:ubiquinol-cytochrome-c reductase activity"/>
    <property type="evidence" value="ECO:0007669"/>
    <property type="project" value="InterPro"/>
</dbReference>
<dbReference type="GO" id="GO:0006122">
    <property type="term" value="P:mitochondrial electron transport, ubiquinol to cytochrome c"/>
    <property type="evidence" value="ECO:0007669"/>
    <property type="project" value="TreeGrafter"/>
</dbReference>
<dbReference type="CDD" id="cd00290">
    <property type="entry name" value="cytochrome_b_C"/>
    <property type="match status" value="1"/>
</dbReference>
<dbReference type="CDD" id="cd00284">
    <property type="entry name" value="Cytochrome_b_N"/>
    <property type="match status" value="1"/>
</dbReference>
<dbReference type="FunFam" id="1.20.810.10:FF:000002">
    <property type="entry name" value="Cytochrome b"/>
    <property type="match status" value="1"/>
</dbReference>
<dbReference type="Gene3D" id="1.20.810.10">
    <property type="entry name" value="Cytochrome Bc1 Complex, Chain C"/>
    <property type="match status" value="1"/>
</dbReference>
<dbReference type="InterPro" id="IPR005798">
    <property type="entry name" value="Cyt_b/b6_C"/>
</dbReference>
<dbReference type="InterPro" id="IPR036150">
    <property type="entry name" value="Cyt_b/b6_C_sf"/>
</dbReference>
<dbReference type="InterPro" id="IPR005797">
    <property type="entry name" value="Cyt_b/b6_N"/>
</dbReference>
<dbReference type="InterPro" id="IPR027387">
    <property type="entry name" value="Cytb/b6-like_sf"/>
</dbReference>
<dbReference type="InterPro" id="IPR030689">
    <property type="entry name" value="Cytochrome_b"/>
</dbReference>
<dbReference type="InterPro" id="IPR048260">
    <property type="entry name" value="Cytochrome_b_C_euk/bac"/>
</dbReference>
<dbReference type="InterPro" id="IPR048259">
    <property type="entry name" value="Cytochrome_b_N_euk/bac"/>
</dbReference>
<dbReference type="InterPro" id="IPR016174">
    <property type="entry name" value="Di-haem_cyt_TM"/>
</dbReference>
<dbReference type="PANTHER" id="PTHR19271">
    <property type="entry name" value="CYTOCHROME B"/>
    <property type="match status" value="1"/>
</dbReference>
<dbReference type="PANTHER" id="PTHR19271:SF16">
    <property type="entry name" value="CYTOCHROME B"/>
    <property type="match status" value="1"/>
</dbReference>
<dbReference type="Pfam" id="PF00032">
    <property type="entry name" value="Cytochrom_B_C"/>
    <property type="match status" value="1"/>
</dbReference>
<dbReference type="Pfam" id="PF00033">
    <property type="entry name" value="Cytochrome_B"/>
    <property type="match status" value="1"/>
</dbReference>
<dbReference type="PIRSF" id="PIRSF038885">
    <property type="entry name" value="COB"/>
    <property type="match status" value="1"/>
</dbReference>
<dbReference type="SUPFAM" id="SSF81648">
    <property type="entry name" value="a domain/subunit of cytochrome bc1 complex (Ubiquinol-cytochrome c reductase)"/>
    <property type="match status" value="1"/>
</dbReference>
<dbReference type="SUPFAM" id="SSF81342">
    <property type="entry name" value="Transmembrane di-heme cytochromes"/>
    <property type="match status" value="1"/>
</dbReference>
<dbReference type="PROSITE" id="PS51003">
    <property type="entry name" value="CYTB_CTER"/>
    <property type="match status" value="1"/>
</dbReference>
<dbReference type="PROSITE" id="PS51002">
    <property type="entry name" value="CYTB_NTER"/>
    <property type="match status" value="1"/>
</dbReference>
<organism>
    <name type="scientific">Todus todus</name>
    <name type="common">Jamaican tody</name>
    <dbReference type="NCBI Taxonomy" id="57436"/>
    <lineage>
        <taxon>Eukaryota</taxon>
        <taxon>Metazoa</taxon>
        <taxon>Chordata</taxon>
        <taxon>Craniata</taxon>
        <taxon>Vertebrata</taxon>
        <taxon>Euteleostomi</taxon>
        <taxon>Archelosauria</taxon>
        <taxon>Archosauria</taxon>
        <taxon>Dinosauria</taxon>
        <taxon>Saurischia</taxon>
        <taxon>Theropoda</taxon>
        <taxon>Coelurosauria</taxon>
        <taxon>Aves</taxon>
        <taxon>Neognathae</taxon>
        <taxon>Neoaves</taxon>
        <taxon>Telluraves</taxon>
        <taxon>Coraciimorphae</taxon>
        <taxon>Coraciiformes</taxon>
        <taxon>Todidae</taxon>
        <taxon>Todus</taxon>
    </lineage>
</organism>
<reference key="1">
    <citation type="journal article" date="2000" name="Mol. Phylogenet. Evol.">
        <title>Higher-level phylogeny of trogoniformes.</title>
        <authorList>
            <person name="Espinosa de los Monteros A."/>
        </authorList>
    </citation>
    <scope>NUCLEOTIDE SEQUENCE [GENOMIC DNA]</scope>
</reference>
<evidence type="ECO:0000250" key="1"/>
<evidence type="ECO:0000250" key="2">
    <source>
        <dbReference type="UniProtKB" id="P00157"/>
    </source>
</evidence>
<evidence type="ECO:0000255" key="3">
    <source>
        <dbReference type="PROSITE-ProRule" id="PRU00967"/>
    </source>
</evidence>
<evidence type="ECO:0000255" key="4">
    <source>
        <dbReference type="PROSITE-ProRule" id="PRU00968"/>
    </source>
</evidence>
<accession>Q9ZZD2</accession>